<feature type="chain" id="PRO_0000266380" description="Guanylate kinase">
    <location>
        <begin position="1"/>
        <end position="220"/>
    </location>
</feature>
<feature type="domain" description="Guanylate kinase-like" evidence="1">
    <location>
        <begin position="15"/>
        <end position="194"/>
    </location>
</feature>
<feature type="binding site" evidence="1">
    <location>
        <begin position="22"/>
        <end position="29"/>
    </location>
    <ligand>
        <name>ATP</name>
        <dbReference type="ChEBI" id="CHEBI:30616"/>
    </ligand>
</feature>
<protein>
    <recommendedName>
        <fullName evidence="1">Guanylate kinase</fullName>
        <ecNumber evidence="1">2.7.4.8</ecNumber>
    </recommendedName>
    <alternativeName>
        <fullName evidence="1">GMP kinase</fullName>
    </alternativeName>
</protein>
<organism>
    <name type="scientific">Rhizobium johnstonii (strain DSM 114642 / LMG 32736 / 3841)</name>
    <name type="common">Rhizobium leguminosarum bv. viciae</name>
    <dbReference type="NCBI Taxonomy" id="216596"/>
    <lineage>
        <taxon>Bacteria</taxon>
        <taxon>Pseudomonadati</taxon>
        <taxon>Pseudomonadota</taxon>
        <taxon>Alphaproteobacteria</taxon>
        <taxon>Hyphomicrobiales</taxon>
        <taxon>Rhizobiaceae</taxon>
        <taxon>Rhizobium/Agrobacterium group</taxon>
        <taxon>Rhizobium</taxon>
        <taxon>Rhizobium johnstonii</taxon>
    </lineage>
</organism>
<keyword id="KW-0067">ATP-binding</keyword>
<keyword id="KW-0963">Cytoplasm</keyword>
<keyword id="KW-0418">Kinase</keyword>
<keyword id="KW-0547">Nucleotide-binding</keyword>
<keyword id="KW-0808">Transferase</keyword>
<evidence type="ECO:0000255" key="1">
    <source>
        <dbReference type="HAMAP-Rule" id="MF_00328"/>
    </source>
</evidence>
<sequence length="220" mass="25232">MKPAKSSPVQIARRGLMLVISSPSGAGKSTIARTLLETDRQIGLSVSVTTRQRRPSEVEDVHYHFKSVREFERLRDSDALLEWAEVHGNFYGTPREPVEQAMGEGRDMLFDIDWQGAQQLQEKMSADVVSIFVLPPTMTELQSRLHRRAEDSEEVIQTRLANSRAEIAHWREYDYVIVNDDLNAALDAVQSIVKAERLRRDRRHGMFDFVRELLEETPSL</sequence>
<dbReference type="EC" id="2.7.4.8" evidence="1"/>
<dbReference type="EMBL" id="AM236080">
    <property type="protein sequence ID" value="CAK07058.1"/>
    <property type="molecule type" value="Genomic_DNA"/>
</dbReference>
<dbReference type="RefSeq" id="WP_003547062.1">
    <property type="nucleotide sequence ID" value="NC_008380.1"/>
</dbReference>
<dbReference type="SMR" id="Q1MJ02"/>
<dbReference type="EnsemblBacteria" id="CAK07058">
    <property type="protein sequence ID" value="CAK07058"/>
    <property type="gene ID" value="RL1563"/>
</dbReference>
<dbReference type="KEGG" id="rle:RL1563"/>
<dbReference type="eggNOG" id="COG0194">
    <property type="taxonomic scope" value="Bacteria"/>
</dbReference>
<dbReference type="HOGENOM" id="CLU_001715_1_0_5"/>
<dbReference type="Proteomes" id="UP000006575">
    <property type="component" value="Chromosome"/>
</dbReference>
<dbReference type="GO" id="GO:0005829">
    <property type="term" value="C:cytosol"/>
    <property type="evidence" value="ECO:0007669"/>
    <property type="project" value="TreeGrafter"/>
</dbReference>
<dbReference type="GO" id="GO:0005524">
    <property type="term" value="F:ATP binding"/>
    <property type="evidence" value="ECO:0007669"/>
    <property type="project" value="UniProtKB-UniRule"/>
</dbReference>
<dbReference type="GO" id="GO:0004385">
    <property type="term" value="F:guanylate kinase activity"/>
    <property type="evidence" value="ECO:0007669"/>
    <property type="project" value="UniProtKB-UniRule"/>
</dbReference>
<dbReference type="CDD" id="cd00071">
    <property type="entry name" value="GMPK"/>
    <property type="match status" value="1"/>
</dbReference>
<dbReference type="FunFam" id="3.30.63.10:FF:000002">
    <property type="entry name" value="Guanylate kinase 1"/>
    <property type="match status" value="1"/>
</dbReference>
<dbReference type="Gene3D" id="3.30.63.10">
    <property type="entry name" value="Guanylate Kinase phosphate binding domain"/>
    <property type="match status" value="1"/>
</dbReference>
<dbReference type="Gene3D" id="3.40.50.300">
    <property type="entry name" value="P-loop containing nucleotide triphosphate hydrolases"/>
    <property type="match status" value="1"/>
</dbReference>
<dbReference type="HAMAP" id="MF_00328">
    <property type="entry name" value="Guanylate_kinase"/>
    <property type="match status" value="1"/>
</dbReference>
<dbReference type="InterPro" id="IPR008145">
    <property type="entry name" value="GK/Ca_channel_bsu"/>
</dbReference>
<dbReference type="InterPro" id="IPR008144">
    <property type="entry name" value="Guanylate_kin-like_dom"/>
</dbReference>
<dbReference type="InterPro" id="IPR017665">
    <property type="entry name" value="Guanylate_kinase"/>
</dbReference>
<dbReference type="InterPro" id="IPR027417">
    <property type="entry name" value="P-loop_NTPase"/>
</dbReference>
<dbReference type="NCBIfam" id="TIGR03263">
    <property type="entry name" value="guanyl_kin"/>
    <property type="match status" value="1"/>
</dbReference>
<dbReference type="PANTHER" id="PTHR23117:SF13">
    <property type="entry name" value="GUANYLATE KINASE"/>
    <property type="match status" value="1"/>
</dbReference>
<dbReference type="PANTHER" id="PTHR23117">
    <property type="entry name" value="GUANYLATE KINASE-RELATED"/>
    <property type="match status" value="1"/>
</dbReference>
<dbReference type="Pfam" id="PF00625">
    <property type="entry name" value="Guanylate_kin"/>
    <property type="match status" value="1"/>
</dbReference>
<dbReference type="SMART" id="SM00072">
    <property type="entry name" value="GuKc"/>
    <property type="match status" value="1"/>
</dbReference>
<dbReference type="SUPFAM" id="SSF52540">
    <property type="entry name" value="P-loop containing nucleoside triphosphate hydrolases"/>
    <property type="match status" value="1"/>
</dbReference>
<dbReference type="PROSITE" id="PS50052">
    <property type="entry name" value="GUANYLATE_KINASE_2"/>
    <property type="match status" value="1"/>
</dbReference>
<comment type="function">
    <text evidence="1">Essential for recycling GMP and indirectly, cGMP.</text>
</comment>
<comment type="catalytic activity">
    <reaction evidence="1">
        <text>GMP + ATP = GDP + ADP</text>
        <dbReference type="Rhea" id="RHEA:20780"/>
        <dbReference type="ChEBI" id="CHEBI:30616"/>
        <dbReference type="ChEBI" id="CHEBI:58115"/>
        <dbReference type="ChEBI" id="CHEBI:58189"/>
        <dbReference type="ChEBI" id="CHEBI:456216"/>
        <dbReference type="EC" id="2.7.4.8"/>
    </reaction>
</comment>
<comment type="subcellular location">
    <subcellularLocation>
        <location evidence="1">Cytoplasm</location>
    </subcellularLocation>
</comment>
<comment type="similarity">
    <text evidence="1">Belongs to the guanylate kinase family.</text>
</comment>
<name>KGUA_RHIJ3</name>
<accession>Q1MJ02</accession>
<reference key="1">
    <citation type="journal article" date="2006" name="Genome Biol.">
        <title>The genome of Rhizobium leguminosarum has recognizable core and accessory components.</title>
        <authorList>
            <person name="Young J.P.W."/>
            <person name="Crossman L.C."/>
            <person name="Johnston A.W.B."/>
            <person name="Thomson N.R."/>
            <person name="Ghazoui Z.F."/>
            <person name="Hull K.H."/>
            <person name="Wexler M."/>
            <person name="Curson A.R.J."/>
            <person name="Todd J.D."/>
            <person name="Poole P.S."/>
            <person name="Mauchline T.H."/>
            <person name="East A.K."/>
            <person name="Quail M.A."/>
            <person name="Churcher C."/>
            <person name="Arrowsmith C."/>
            <person name="Cherevach I."/>
            <person name="Chillingworth T."/>
            <person name="Clarke K."/>
            <person name="Cronin A."/>
            <person name="Davis P."/>
            <person name="Fraser A."/>
            <person name="Hance Z."/>
            <person name="Hauser H."/>
            <person name="Jagels K."/>
            <person name="Moule S."/>
            <person name="Mungall K."/>
            <person name="Norbertczak H."/>
            <person name="Rabbinowitsch E."/>
            <person name="Sanders M."/>
            <person name="Simmonds M."/>
            <person name="Whitehead S."/>
            <person name="Parkhill J."/>
        </authorList>
    </citation>
    <scope>NUCLEOTIDE SEQUENCE [LARGE SCALE GENOMIC DNA]</scope>
    <source>
        <strain>DSM 114642 / LMG 32736 / 3841</strain>
    </source>
</reference>
<gene>
    <name evidence="1" type="primary">gmk</name>
    <name type="ordered locus">RL1563</name>
</gene>
<proteinExistence type="inferred from homology"/>